<organism>
    <name type="scientific">Paramagnetospirillum magneticum (strain ATCC 700264 / AMB-1)</name>
    <name type="common">Magnetospirillum magneticum</name>
    <dbReference type="NCBI Taxonomy" id="342108"/>
    <lineage>
        <taxon>Bacteria</taxon>
        <taxon>Pseudomonadati</taxon>
        <taxon>Pseudomonadota</taxon>
        <taxon>Alphaproteobacteria</taxon>
        <taxon>Rhodospirillales</taxon>
        <taxon>Magnetospirillaceae</taxon>
        <taxon>Paramagnetospirillum</taxon>
    </lineage>
</organism>
<proteinExistence type="inferred from homology"/>
<reference key="1">
    <citation type="journal article" date="2005" name="DNA Res.">
        <title>Complete genome sequence of the facultative anaerobic magnetotactic bacterium Magnetospirillum sp. strain AMB-1.</title>
        <authorList>
            <person name="Matsunaga T."/>
            <person name="Okamura Y."/>
            <person name="Fukuda Y."/>
            <person name="Wahyudi A.T."/>
            <person name="Murase Y."/>
            <person name="Takeyama H."/>
        </authorList>
    </citation>
    <scope>NUCLEOTIDE SEQUENCE [LARGE SCALE GENOMIC DNA]</scope>
    <source>
        <strain>ATCC 700264 / AMB-1</strain>
    </source>
</reference>
<name>PNP_PARM1</name>
<keyword id="KW-0963">Cytoplasm</keyword>
<keyword id="KW-0460">Magnesium</keyword>
<keyword id="KW-0479">Metal-binding</keyword>
<keyword id="KW-0548">Nucleotidyltransferase</keyword>
<keyword id="KW-0694">RNA-binding</keyword>
<keyword id="KW-0808">Transferase</keyword>
<protein>
    <recommendedName>
        <fullName evidence="1">Polyribonucleotide nucleotidyltransferase</fullName>
        <ecNumber evidence="1">2.7.7.8</ecNumber>
    </recommendedName>
    <alternativeName>
        <fullName evidence="1">Polynucleotide phosphorylase</fullName>
        <shortName evidence="1">PNPase</shortName>
    </alternativeName>
</protein>
<sequence>MSMFNVHRKEITWGGRKLVLETGKVARQADGAVMVTYGETSVLCTVVGAKSQKPGIDFFPLTVNYQEKAFAAGKIPGGFFKREGRPSEKETLVSRLIDRPIRPLFADGFRNEVQVVCTVLSHDLENDPDIAALVGTSAALTISGLPFMGPVGAARVGYVDGAYVLNPLVGDLPKSELDLVVAGTVEGVLMVESEAKQLSEDVMLGAVMFGHREFQAVIQAIIDLAEECAKDPWDLPEPPAEVAVVTGKFNDAGVPAELAEAYKIIKKQDRYAAVGAVKKKALALLTEAAEIAVAGGILKHLEADVVRGNILKTGVRIDGRDTKTVRAIEVEVGVLPRAHGSALFTRGETQALVVATLGTGQDEQIIDQLAGEYREHFMLHYNFPPYSVGEAGRMGSPGRREIGHGKLAWRAMRPCLPAKESFPYTMRVVSEITESNGSSSMASVCGSSLALMDAGVPLPKPVAGIAMGLIKEGTDFAVLSDILGDEDHLGDMDFKVAGTVDGVTALQMDIKITSITEEIMKIALGQAKDGRIHILGEMNKGLDHARDSVSGNAPRITTISIPKEKIREVIGTGGKVIREICEQTGAKIDIDDDGTIKVASVDADAAQRAIDWIRGIVAEPELGVIYNGKVVKVVDFGAFVNFLGSRDGLVHISELARERVAKTADVVKQGDVVKVKVLGFDDRGKVKLSMKQVDQTTGEDISAQLEAERAASKRERHHED</sequence>
<comment type="function">
    <text evidence="1">Involved in mRNA degradation. Catalyzes the phosphorolysis of single-stranded polyribonucleotides processively in the 3'- to 5'-direction.</text>
</comment>
<comment type="catalytic activity">
    <reaction evidence="1">
        <text>RNA(n+1) + phosphate = RNA(n) + a ribonucleoside 5'-diphosphate</text>
        <dbReference type="Rhea" id="RHEA:22096"/>
        <dbReference type="Rhea" id="RHEA-COMP:14527"/>
        <dbReference type="Rhea" id="RHEA-COMP:17342"/>
        <dbReference type="ChEBI" id="CHEBI:43474"/>
        <dbReference type="ChEBI" id="CHEBI:57930"/>
        <dbReference type="ChEBI" id="CHEBI:140395"/>
        <dbReference type="EC" id="2.7.7.8"/>
    </reaction>
</comment>
<comment type="cofactor">
    <cofactor evidence="1">
        <name>Mg(2+)</name>
        <dbReference type="ChEBI" id="CHEBI:18420"/>
    </cofactor>
</comment>
<comment type="subcellular location">
    <subcellularLocation>
        <location evidence="1">Cytoplasm</location>
    </subcellularLocation>
</comment>
<comment type="similarity">
    <text evidence="1">Belongs to the polyribonucleotide nucleotidyltransferase family.</text>
</comment>
<dbReference type="EC" id="2.7.7.8" evidence="1"/>
<dbReference type="EMBL" id="AP007255">
    <property type="protein sequence ID" value="BAE52921.1"/>
    <property type="molecule type" value="Genomic_DNA"/>
</dbReference>
<dbReference type="RefSeq" id="WP_011386466.1">
    <property type="nucleotide sequence ID" value="NC_007626.1"/>
</dbReference>
<dbReference type="SMR" id="Q2VZQ4"/>
<dbReference type="STRING" id="342108.amb4117"/>
<dbReference type="KEGG" id="mag:amb4117"/>
<dbReference type="HOGENOM" id="CLU_004217_2_2_5"/>
<dbReference type="OrthoDB" id="9804305at2"/>
<dbReference type="Proteomes" id="UP000007058">
    <property type="component" value="Chromosome"/>
</dbReference>
<dbReference type="GO" id="GO:0005829">
    <property type="term" value="C:cytosol"/>
    <property type="evidence" value="ECO:0007669"/>
    <property type="project" value="TreeGrafter"/>
</dbReference>
<dbReference type="GO" id="GO:0000175">
    <property type="term" value="F:3'-5'-RNA exonuclease activity"/>
    <property type="evidence" value="ECO:0007669"/>
    <property type="project" value="TreeGrafter"/>
</dbReference>
<dbReference type="GO" id="GO:0000287">
    <property type="term" value="F:magnesium ion binding"/>
    <property type="evidence" value="ECO:0007669"/>
    <property type="project" value="UniProtKB-UniRule"/>
</dbReference>
<dbReference type="GO" id="GO:0004654">
    <property type="term" value="F:polyribonucleotide nucleotidyltransferase activity"/>
    <property type="evidence" value="ECO:0007669"/>
    <property type="project" value="UniProtKB-UniRule"/>
</dbReference>
<dbReference type="GO" id="GO:0003723">
    <property type="term" value="F:RNA binding"/>
    <property type="evidence" value="ECO:0007669"/>
    <property type="project" value="UniProtKB-UniRule"/>
</dbReference>
<dbReference type="GO" id="GO:0006402">
    <property type="term" value="P:mRNA catabolic process"/>
    <property type="evidence" value="ECO:0007669"/>
    <property type="project" value="UniProtKB-UniRule"/>
</dbReference>
<dbReference type="GO" id="GO:0006396">
    <property type="term" value="P:RNA processing"/>
    <property type="evidence" value="ECO:0007669"/>
    <property type="project" value="InterPro"/>
</dbReference>
<dbReference type="CDD" id="cd02393">
    <property type="entry name" value="KH-I_PNPase"/>
    <property type="match status" value="1"/>
</dbReference>
<dbReference type="CDD" id="cd11363">
    <property type="entry name" value="RNase_PH_PNPase_1"/>
    <property type="match status" value="1"/>
</dbReference>
<dbReference type="CDD" id="cd11364">
    <property type="entry name" value="RNase_PH_PNPase_2"/>
    <property type="match status" value="1"/>
</dbReference>
<dbReference type="CDD" id="cd04472">
    <property type="entry name" value="S1_PNPase"/>
    <property type="match status" value="1"/>
</dbReference>
<dbReference type="FunFam" id="2.40.50.140:FF:000107">
    <property type="entry name" value="Polyribonucleotide nucleotidyltransferase"/>
    <property type="match status" value="1"/>
</dbReference>
<dbReference type="FunFam" id="3.30.1370.10:FF:000001">
    <property type="entry name" value="Polyribonucleotide nucleotidyltransferase"/>
    <property type="match status" value="1"/>
</dbReference>
<dbReference type="FunFam" id="3.30.230.70:FF:000001">
    <property type="entry name" value="Polyribonucleotide nucleotidyltransferase"/>
    <property type="match status" value="1"/>
</dbReference>
<dbReference type="FunFam" id="3.30.230.70:FF:000002">
    <property type="entry name" value="Polyribonucleotide nucleotidyltransferase"/>
    <property type="match status" value="1"/>
</dbReference>
<dbReference type="Gene3D" id="3.30.230.70">
    <property type="entry name" value="GHMP Kinase, N-terminal domain"/>
    <property type="match status" value="2"/>
</dbReference>
<dbReference type="Gene3D" id="3.30.1370.10">
    <property type="entry name" value="K Homology domain, type 1"/>
    <property type="match status" value="1"/>
</dbReference>
<dbReference type="Gene3D" id="2.40.50.140">
    <property type="entry name" value="Nucleic acid-binding proteins"/>
    <property type="match status" value="1"/>
</dbReference>
<dbReference type="HAMAP" id="MF_01595">
    <property type="entry name" value="PNPase"/>
    <property type="match status" value="1"/>
</dbReference>
<dbReference type="InterPro" id="IPR001247">
    <property type="entry name" value="ExoRNase_PH_dom1"/>
</dbReference>
<dbReference type="InterPro" id="IPR015847">
    <property type="entry name" value="ExoRNase_PH_dom2"/>
</dbReference>
<dbReference type="InterPro" id="IPR036345">
    <property type="entry name" value="ExoRNase_PH_dom2_sf"/>
</dbReference>
<dbReference type="InterPro" id="IPR004087">
    <property type="entry name" value="KH_dom"/>
</dbReference>
<dbReference type="InterPro" id="IPR004088">
    <property type="entry name" value="KH_dom_type_1"/>
</dbReference>
<dbReference type="InterPro" id="IPR036612">
    <property type="entry name" value="KH_dom_type_1_sf"/>
</dbReference>
<dbReference type="InterPro" id="IPR012340">
    <property type="entry name" value="NA-bd_OB-fold"/>
</dbReference>
<dbReference type="InterPro" id="IPR012162">
    <property type="entry name" value="PNPase"/>
</dbReference>
<dbReference type="InterPro" id="IPR027408">
    <property type="entry name" value="PNPase/RNase_PH_dom_sf"/>
</dbReference>
<dbReference type="InterPro" id="IPR015848">
    <property type="entry name" value="PNPase_PH_RNA-bd_bac/org-type"/>
</dbReference>
<dbReference type="InterPro" id="IPR020568">
    <property type="entry name" value="Ribosomal_Su5_D2-typ_SF"/>
</dbReference>
<dbReference type="InterPro" id="IPR003029">
    <property type="entry name" value="S1_domain"/>
</dbReference>
<dbReference type="NCBIfam" id="TIGR03591">
    <property type="entry name" value="polynuc_phos"/>
    <property type="match status" value="1"/>
</dbReference>
<dbReference type="NCBIfam" id="NF008805">
    <property type="entry name" value="PRK11824.1"/>
    <property type="match status" value="1"/>
</dbReference>
<dbReference type="PANTHER" id="PTHR11252">
    <property type="entry name" value="POLYRIBONUCLEOTIDE NUCLEOTIDYLTRANSFERASE"/>
    <property type="match status" value="1"/>
</dbReference>
<dbReference type="PANTHER" id="PTHR11252:SF0">
    <property type="entry name" value="POLYRIBONUCLEOTIDE NUCLEOTIDYLTRANSFERASE 1, MITOCHONDRIAL"/>
    <property type="match status" value="1"/>
</dbReference>
<dbReference type="Pfam" id="PF00013">
    <property type="entry name" value="KH_1"/>
    <property type="match status" value="1"/>
</dbReference>
<dbReference type="Pfam" id="PF03726">
    <property type="entry name" value="PNPase"/>
    <property type="match status" value="1"/>
</dbReference>
<dbReference type="Pfam" id="PF01138">
    <property type="entry name" value="RNase_PH"/>
    <property type="match status" value="2"/>
</dbReference>
<dbReference type="Pfam" id="PF03725">
    <property type="entry name" value="RNase_PH_C"/>
    <property type="match status" value="2"/>
</dbReference>
<dbReference type="Pfam" id="PF00575">
    <property type="entry name" value="S1"/>
    <property type="match status" value="1"/>
</dbReference>
<dbReference type="PIRSF" id="PIRSF005499">
    <property type="entry name" value="PNPase"/>
    <property type="match status" value="1"/>
</dbReference>
<dbReference type="SMART" id="SM00322">
    <property type="entry name" value="KH"/>
    <property type="match status" value="1"/>
</dbReference>
<dbReference type="SMART" id="SM00316">
    <property type="entry name" value="S1"/>
    <property type="match status" value="1"/>
</dbReference>
<dbReference type="SUPFAM" id="SSF54791">
    <property type="entry name" value="Eukaryotic type KH-domain (KH-domain type I)"/>
    <property type="match status" value="1"/>
</dbReference>
<dbReference type="SUPFAM" id="SSF50249">
    <property type="entry name" value="Nucleic acid-binding proteins"/>
    <property type="match status" value="1"/>
</dbReference>
<dbReference type="SUPFAM" id="SSF55666">
    <property type="entry name" value="Ribonuclease PH domain 2-like"/>
    <property type="match status" value="2"/>
</dbReference>
<dbReference type="SUPFAM" id="SSF54211">
    <property type="entry name" value="Ribosomal protein S5 domain 2-like"/>
    <property type="match status" value="2"/>
</dbReference>
<dbReference type="PROSITE" id="PS50084">
    <property type="entry name" value="KH_TYPE_1"/>
    <property type="match status" value="1"/>
</dbReference>
<dbReference type="PROSITE" id="PS50126">
    <property type="entry name" value="S1"/>
    <property type="match status" value="1"/>
</dbReference>
<evidence type="ECO:0000255" key="1">
    <source>
        <dbReference type="HAMAP-Rule" id="MF_01595"/>
    </source>
</evidence>
<evidence type="ECO:0000256" key="2">
    <source>
        <dbReference type="SAM" id="MobiDB-lite"/>
    </source>
</evidence>
<gene>
    <name evidence="1" type="primary">pnp</name>
    <name type="ordered locus">amb4117</name>
</gene>
<accession>Q2VZQ4</accession>
<feature type="chain" id="PRO_0000329706" description="Polyribonucleotide nucleotidyltransferase">
    <location>
        <begin position="1"/>
        <end position="720"/>
    </location>
</feature>
<feature type="domain" description="KH" evidence="1">
    <location>
        <begin position="554"/>
        <end position="613"/>
    </location>
</feature>
<feature type="domain" description="S1 motif" evidence="1">
    <location>
        <begin position="623"/>
        <end position="691"/>
    </location>
</feature>
<feature type="region of interest" description="Disordered" evidence="2">
    <location>
        <begin position="695"/>
        <end position="720"/>
    </location>
</feature>
<feature type="compositionally biased region" description="Basic and acidic residues" evidence="2">
    <location>
        <begin position="706"/>
        <end position="720"/>
    </location>
</feature>
<feature type="binding site" evidence="1">
    <location>
        <position position="487"/>
    </location>
    <ligand>
        <name>Mg(2+)</name>
        <dbReference type="ChEBI" id="CHEBI:18420"/>
    </ligand>
</feature>
<feature type="binding site" evidence="1">
    <location>
        <position position="493"/>
    </location>
    <ligand>
        <name>Mg(2+)</name>
        <dbReference type="ChEBI" id="CHEBI:18420"/>
    </ligand>
</feature>